<gene>
    <name type="primary">gatA</name>
    <name type="ordered locus">aq_247</name>
</gene>
<feature type="chain" id="PRO_0000105133" description="Glutamyl-tRNA(Gln) amidotransferase subunit A">
    <location>
        <begin position="1"/>
        <end position="478"/>
    </location>
</feature>
<feature type="active site" description="Charge relay system" evidence="1">
    <location>
        <position position="72"/>
    </location>
</feature>
<feature type="active site" description="Charge relay system" evidence="1">
    <location>
        <position position="147"/>
    </location>
</feature>
<feature type="active site" description="Acyl-ester intermediate" evidence="1">
    <location>
        <position position="171"/>
    </location>
</feature>
<feature type="helix" evidence="3">
    <location>
        <begin position="7"/>
        <end position="15"/>
    </location>
</feature>
<feature type="helix" evidence="3">
    <location>
        <begin position="21"/>
        <end position="39"/>
    </location>
</feature>
<feature type="strand" evidence="3">
    <location>
        <begin position="42"/>
        <end position="45"/>
    </location>
</feature>
<feature type="helix" evidence="3">
    <location>
        <begin position="47"/>
        <end position="55"/>
    </location>
</feature>
<feature type="turn" evidence="3">
    <location>
        <begin position="63"/>
        <end position="66"/>
    </location>
</feature>
<feature type="strand" evidence="3">
    <location>
        <begin position="68"/>
        <end position="72"/>
    </location>
</feature>
<feature type="helix" evidence="3">
    <location>
        <begin position="87"/>
        <end position="89"/>
    </location>
</feature>
<feature type="helix" evidence="3">
    <location>
        <begin position="99"/>
        <end position="106"/>
    </location>
</feature>
<feature type="strand" evidence="3">
    <location>
        <begin position="110"/>
        <end position="115"/>
    </location>
</feature>
<feature type="helix" evidence="3">
    <location>
        <begin position="119"/>
        <end position="121"/>
    </location>
</feature>
<feature type="strand" evidence="3">
    <location>
        <begin position="124"/>
        <end position="126"/>
    </location>
</feature>
<feature type="strand" evidence="3">
    <location>
        <begin position="146"/>
        <end position="148"/>
    </location>
</feature>
<feature type="helix" evidence="3">
    <location>
        <begin position="149"/>
        <end position="156"/>
    </location>
</feature>
<feature type="strand" evidence="3">
    <location>
        <begin position="159"/>
        <end position="161"/>
    </location>
</feature>
<feature type="strand" evidence="3">
    <location>
        <begin position="163"/>
        <end position="166"/>
    </location>
</feature>
<feature type="strand" evidence="3">
    <location>
        <begin position="168"/>
        <end position="170"/>
    </location>
</feature>
<feature type="helix" evidence="3">
    <location>
        <begin position="173"/>
        <end position="179"/>
    </location>
</feature>
<feature type="strand" evidence="3">
    <location>
        <begin position="182"/>
        <end position="185"/>
    </location>
</feature>
<feature type="turn" evidence="3">
    <location>
        <begin position="201"/>
        <end position="203"/>
    </location>
</feature>
<feature type="strand" evidence="3">
    <location>
        <begin position="206"/>
        <end position="212"/>
    </location>
</feature>
<feature type="helix" evidence="3">
    <location>
        <begin position="213"/>
        <end position="223"/>
    </location>
</feature>
<feature type="helix" evidence="3">
    <location>
        <begin position="241"/>
        <end position="244"/>
    </location>
</feature>
<feature type="strand" evidence="3">
    <location>
        <begin position="253"/>
        <end position="257"/>
    </location>
</feature>
<feature type="helix" evidence="3">
    <location>
        <begin position="258"/>
        <end position="262"/>
    </location>
</feature>
<feature type="helix" evidence="3">
    <location>
        <begin position="267"/>
        <end position="282"/>
    </location>
</feature>
<feature type="strand" evidence="3">
    <location>
        <begin position="286"/>
        <end position="290"/>
    </location>
</feature>
<feature type="helix" evidence="3">
    <location>
        <begin position="295"/>
        <end position="297"/>
    </location>
</feature>
<feature type="helix" evidence="3">
    <location>
        <begin position="298"/>
        <end position="313"/>
    </location>
</feature>
<feature type="turn" evidence="3">
    <location>
        <begin position="314"/>
        <end position="316"/>
    </location>
</feature>
<feature type="strand" evidence="3">
    <location>
        <begin position="318"/>
        <end position="323"/>
    </location>
</feature>
<feature type="helix" evidence="3">
    <location>
        <begin position="332"/>
        <end position="343"/>
    </location>
</feature>
<feature type="helix" evidence="3">
    <location>
        <begin position="346"/>
        <end position="358"/>
    </location>
</feature>
<feature type="turn" evidence="3">
    <location>
        <begin position="361"/>
        <end position="367"/>
    </location>
</feature>
<feature type="helix" evidence="3">
    <location>
        <begin position="368"/>
        <end position="385"/>
    </location>
</feature>
<feature type="turn" evidence="3">
    <location>
        <begin position="386"/>
        <end position="388"/>
    </location>
</feature>
<feature type="strand" evidence="3">
    <location>
        <begin position="390"/>
        <end position="396"/>
    </location>
</feature>
<feature type="strand" evidence="3">
    <location>
        <begin position="398"/>
        <end position="400"/>
    </location>
</feature>
<feature type="turn" evidence="3">
    <location>
        <begin position="404"/>
        <end position="407"/>
    </location>
</feature>
<feature type="strand" evidence="3">
    <location>
        <begin position="408"/>
        <end position="410"/>
    </location>
</feature>
<feature type="helix" evidence="3">
    <location>
        <begin position="411"/>
        <end position="415"/>
    </location>
</feature>
<feature type="helix" evidence="3">
    <location>
        <begin position="416"/>
        <end position="418"/>
    </location>
</feature>
<feature type="turn" evidence="3">
    <location>
        <begin position="419"/>
        <end position="421"/>
    </location>
</feature>
<feature type="helix" evidence="3">
    <location>
        <begin position="422"/>
        <end position="427"/>
    </location>
</feature>
<feature type="strand" evidence="3">
    <location>
        <begin position="431"/>
        <end position="439"/>
    </location>
</feature>
<feature type="strand" evidence="3">
    <location>
        <begin position="442"/>
        <end position="450"/>
    </location>
</feature>
<feature type="helix" evidence="3">
    <location>
        <begin position="455"/>
        <end position="468"/>
    </location>
</feature>
<feature type="helix" evidence="3">
    <location>
        <begin position="471"/>
        <end position="473"/>
    </location>
</feature>
<organism>
    <name type="scientific">Aquifex aeolicus (strain VF5)</name>
    <dbReference type="NCBI Taxonomy" id="224324"/>
    <lineage>
        <taxon>Bacteria</taxon>
        <taxon>Pseudomonadati</taxon>
        <taxon>Aquificota</taxon>
        <taxon>Aquificia</taxon>
        <taxon>Aquificales</taxon>
        <taxon>Aquificaceae</taxon>
        <taxon>Aquifex</taxon>
    </lineage>
</organism>
<accession>O66610</accession>
<keyword id="KW-0002">3D-structure</keyword>
<keyword id="KW-0067">ATP-binding</keyword>
<keyword id="KW-0436">Ligase</keyword>
<keyword id="KW-0547">Nucleotide-binding</keyword>
<keyword id="KW-0648">Protein biosynthesis</keyword>
<keyword id="KW-1185">Reference proteome</keyword>
<dbReference type="EC" id="6.3.5.7"/>
<dbReference type="EMBL" id="AE000657">
    <property type="protein sequence ID" value="AAC06569.1"/>
    <property type="molecule type" value="Genomic_DNA"/>
</dbReference>
<dbReference type="PIR" id="F70322">
    <property type="entry name" value="F70322"/>
</dbReference>
<dbReference type="RefSeq" id="NP_213170.1">
    <property type="nucleotide sequence ID" value="NC_000918.1"/>
</dbReference>
<dbReference type="RefSeq" id="WP_010880108.1">
    <property type="nucleotide sequence ID" value="NC_000918.1"/>
</dbReference>
<dbReference type="PDB" id="3H0L">
    <property type="method" value="X-ray"/>
    <property type="resolution" value="2.30 A"/>
    <property type="chains" value="A/D/G/J/M/P/S/V=1-478"/>
</dbReference>
<dbReference type="PDB" id="3H0M">
    <property type="method" value="X-ray"/>
    <property type="resolution" value="2.80 A"/>
    <property type="chains" value="A/D/G/J/M/P/S/V=1-478"/>
</dbReference>
<dbReference type="PDB" id="3H0R">
    <property type="method" value="X-ray"/>
    <property type="resolution" value="3.00 A"/>
    <property type="chains" value="A/D/G/J/M/P/S/V=1-478"/>
</dbReference>
<dbReference type="PDBsum" id="3H0L"/>
<dbReference type="PDBsum" id="3H0M"/>
<dbReference type="PDBsum" id="3H0R"/>
<dbReference type="SMR" id="O66610"/>
<dbReference type="STRING" id="224324.aq_247"/>
<dbReference type="EnsemblBacteria" id="AAC06569">
    <property type="protein sequence ID" value="AAC06569"/>
    <property type="gene ID" value="aq_247"/>
</dbReference>
<dbReference type="KEGG" id="aae:aq_247"/>
<dbReference type="PATRIC" id="fig|224324.8.peg.202"/>
<dbReference type="eggNOG" id="COG0154">
    <property type="taxonomic scope" value="Bacteria"/>
</dbReference>
<dbReference type="HOGENOM" id="CLU_009600_0_3_0"/>
<dbReference type="InParanoid" id="O66610"/>
<dbReference type="OrthoDB" id="9811471at2"/>
<dbReference type="EvolutionaryTrace" id="O66610"/>
<dbReference type="Proteomes" id="UP000000798">
    <property type="component" value="Chromosome"/>
</dbReference>
<dbReference type="GO" id="GO:0030956">
    <property type="term" value="C:glutamyl-tRNA(Gln) amidotransferase complex"/>
    <property type="evidence" value="ECO:0007669"/>
    <property type="project" value="InterPro"/>
</dbReference>
<dbReference type="GO" id="GO:0005524">
    <property type="term" value="F:ATP binding"/>
    <property type="evidence" value="ECO:0007669"/>
    <property type="project" value="UniProtKB-KW"/>
</dbReference>
<dbReference type="GO" id="GO:0050567">
    <property type="term" value="F:glutaminyl-tRNA synthase (glutamine-hydrolyzing) activity"/>
    <property type="evidence" value="ECO:0007669"/>
    <property type="project" value="UniProtKB-UniRule"/>
</dbReference>
<dbReference type="GO" id="GO:0006412">
    <property type="term" value="P:translation"/>
    <property type="evidence" value="ECO:0007669"/>
    <property type="project" value="UniProtKB-UniRule"/>
</dbReference>
<dbReference type="Gene3D" id="3.90.1300.10">
    <property type="entry name" value="Amidase signature (AS) domain"/>
    <property type="match status" value="1"/>
</dbReference>
<dbReference type="HAMAP" id="MF_00120">
    <property type="entry name" value="GatA"/>
    <property type="match status" value="1"/>
</dbReference>
<dbReference type="InterPro" id="IPR000120">
    <property type="entry name" value="Amidase"/>
</dbReference>
<dbReference type="InterPro" id="IPR020556">
    <property type="entry name" value="Amidase_CS"/>
</dbReference>
<dbReference type="InterPro" id="IPR023631">
    <property type="entry name" value="Amidase_dom"/>
</dbReference>
<dbReference type="InterPro" id="IPR036928">
    <property type="entry name" value="AS_sf"/>
</dbReference>
<dbReference type="InterPro" id="IPR004412">
    <property type="entry name" value="GatA"/>
</dbReference>
<dbReference type="NCBIfam" id="TIGR00132">
    <property type="entry name" value="gatA"/>
    <property type="match status" value="1"/>
</dbReference>
<dbReference type="PANTHER" id="PTHR11895:SF151">
    <property type="entry name" value="GLUTAMYL-TRNA(GLN) AMIDOTRANSFERASE SUBUNIT A"/>
    <property type="match status" value="1"/>
</dbReference>
<dbReference type="PANTHER" id="PTHR11895">
    <property type="entry name" value="TRANSAMIDASE"/>
    <property type="match status" value="1"/>
</dbReference>
<dbReference type="Pfam" id="PF01425">
    <property type="entry name" value="Amidase"/>
    <property type="match status" value="1"/>
</dbReference>
<dbReference type="SUPFAM" id="SSF75304">
    <property type="entry name" value="Amidase signature (AS) enzymes"/>
    <property type="match status" value="1"/>
</dbReference>
<dbReference type="PROSITE" id="PS00571">
    <property type="entry name" value="AMIDASES"/>
    <property type="match status" value="1"/>
</dbReference>
<evidence type="ECO:0000250" key="1"/>
<evidence type="ECO:0000305" key="2"/>
<evidence type="ECO:0007829" key="3">
    <source>
        <dbReference type="PDB" id="3H0L"/>
    </source>
</evidence>
<comment type="function">
    <text evidence="1">Allows the formation of correctly charged Gln-tRNA(Gln) through the transamidation of misacylated Glu-tRNA(Gln) in organisms which lack glutaminyl-tRNA synthetase. The reaction takes place in the presence of glutamine and ATP through an activated gamma-phospho-Glu-tRNA(Gln) (By similarity).</text>
</comment>
<comment type="catalytic activity">
    <reaction>
        <text>L-glutamyl-tRNA(Gln) + L-glutamine + ATP + H2O = L-glutaminyl-tRNA(Gln) + L-glutamate + ADP + phosphate + H(+)</text>
        <dbReference type="Rhea" id="RHEA:17521"/>
        <dbReference type="Rhea" id="RHEA-COMP:9681"/>
        <dbReference type="Rhea" id="RHEA-COMP:9684"/>
        <dbReference type="ChEBI" id="CHEBI:15377"/>
        <dbReference type="ChEBI" id="CHEBI:15378"/>
        <dbReference type="ChEBI" id="CHEBI:29985"/>
        <dbReference type="ChEBI" id="CHEBI:30616"/>
        <dbReference type="ChEBI" id="CHEBI:43474"/>
        <dbReference type="ChEBI" id="CHEBI:58359"/>
        <dbReference type="ChEBI" id="CHEBI:78520"/>
        <dbReference type="ChEBI" id="CHEBI:78521"/>
        <dbReference type="ChEBI" id="CHEBI:456216"/>
        <dbReference type="EC" id="6.3.5.7"/>
    </reaction>
</comment>
<comment type="subunit">
    <text evidence="1">Heterotrimer of A, B and C subunits.</text>
</comment>
<comment type="similarity">
    <text evidence="2">Belongs to the amidase family. GatA subfamily.</text>
</comment>
<protein>
    <recommendedName>
        <fullName>Glutamyl-tRNA(Gln) amidotransferase subunit A</fullName>
        <shortName>Glu-ADT subunit A</shortName>
        <ecNumber>6.3.5.7</ecNumber>
    </recommendedName>
</protein>
<proteinExistence type="evidence at protein level"/>
<reference key="1">
    <citation type="journal article" date="1998" name="Nature">
        <title>The complete genome of the hyperthermophilic bacterium Aquifex aeolicus.</title>
        <authorList>
            <person name="Deckert G."/>
            <person name="Warren P.V."/>
            <person name="Gaasterland T."/>
            <person name="Young W.G."/>
            <person name="Lenox A.L."/>
            <person name="Graham D.E."/>
            <person name="Overbeek R."/>
            <person name="Snead M.A."/>
            <person name="Keller M."/>
            <person name="Aujay M."/>
            <person name="Huber R."/>
            <person name="Feldman R.A."/>
            <person name="Short J.M."/>
            <person name="Olsen G.J."/>
            <person name="Swanson R.V."/>
        </authorList>
    </citation>
    <scope>NUCLEOTIDE SEQUENCE [LARGE SCALE GENOMIC DNA]</scope>
    <source>
        <strain>VF5</strain>
    </source>
</reference>
<name>GATA_AQUAE</name>
<sequence length="478" mass="53524">MLWKKSLSELRELLKRGEVSPKEVVESFYDRYNQTEEKVKAYITPLYGKALKQAESLKERELPLFGIPIAVKDNILVEGEKTTCASKILENFVAPYDATVIERLKKAGALIVGKTNLDEFAMGSSTEYSAFFPTKNPWDLERVPGGSSGGSAASVAVLSAPVSLGSDTGGSIRQPASFCGVIGIKPTYGRVSRYGLVAFASSLDQIGVFGRRTEDVALVLEVISGWDEKDSTSAKVPVPEWSEEVKKEVKGLKIGLPKEFFEYELQPQVKEAFENFIKELEKEGFEIKEVSLPHVKYSIPTYYIIAPSEASSNLARYDGVRYGYRAKEYKDIFEMYARTRDEGFGPEVKRRIMLGTFALSAGYYDAYYLKAQKVRRLITNDFLKAFEEVDVIASPTTPTLPFKFGERLENPIEMYLSDILTVPANLAGLPAISIPIAWKDGLPVGGQLIGKHWDETTLLQISYLWEQKFKHYEKIPLT</sequence>